<accession>Q9MGM4</accession>
<accession>Q9MD69</accession>
<accession>Q9MI12</accession>
<dbReference type="EMBL" id="AF200830">
    <property type="protein sequence ID" value="AAF77263.1"/>
    <property type="molecule type" value="Genomic_DNA"/>
</dbReference>
<dbReference type="EMBL" id="AF200831">
    <property type="protein sequence ID" value="AAF77275.1"/>
    <property type="molecule type" value="Genomic_DNA"/>
</dbReference>
<dbReference type="EMBL" id="AF164587">
    <property type="protein sequence ID" value="AAF81384.1"/>
    <property type="molecule type" value="Genomic_DNA"/>
</dbReference>
<dbReference type="RefSeq" id="NP_987118.1">
    <property type="nucleotide sequence ID" value="NC_005779.1"/>
</dbReference>
<dbReference type="SMR" id="Q9MGM4"/>
<dbReference type="EnsemblMetazoa" id="GeneID_2760927_t1">
    <property type="protein sequence ID" value="NP_987118.1"/>
    <property type="gene ID" value="GeneID_2760927"/>
</dbReference>
<dbReference type="GeneID" id="2760927"/>
<dbReference type="CTD" id="4519"/>
<dbReference type="OrthoDB" id="40939at7215"/>
<dbReference type="Proteomes" id="UP000515162">
    <property type="component" value="Mitochondrion MT"/>
</dbReference>
<dbReference type="GO" id="GO:0005743">
    <property type="term" value="C:mitochondrial inner membrane"/>
    <property type="evidence" value="ECO:0007669"/>
    <property type="project" value="UniProtKB-SubCell"/>
</dbReference>
<dbReference type="GO" id="GO:0045275">
    <property type="term" value="C:respiratory chain complex III"/>
    <property type="evidence" value="ECO:0007669"/>
    <property type="project" value="InterPro"/>
</dbReference>
<dbReference type="GO" id="GO:0046872">
    <property type="term" value="F:metal ion binding"/>
    <property type="evidence" value="ECO:0007669"/>
    <property type="project" value="UniProtKB-KW"/>
</dbReference>
<dbReference type="GO" id="GO:0008121">
    <property type="term" value="F:ubiquinol-cytochrome-c reductase activity"/>
    <property type="evidence" value="ECO:0007669"/>
    <property type="project" value="InterPro"/>
</dbReference>
<dbReference type="GO" id="GO:0006122">
    <property type="term" value="P:mitochondrial electron transport, ubiquinol to cytochrome c"/>
    <property type="evidence" value="ECO:0007669"/>
    <property type="project" value="TreeGrafter"/>
</dbReference>
<dbReference type="CDD" id="cd00290">
    <property type="entry name" value="cytochrome_b_C"/>
    <property type="match status" value="1"/>
</dbReference>
<dbReference type="CDD" id="cd00284">
    <property type="entry name" value="Cytochrome_b_N"/>
    <property type="match status" value="1"/>
</dbReference>
<dbReference type="FunFam" id="1.20.810.10:FF:000002">
    <property type="entry name" value="Cytochrome b"/>
    <property type="match status" value="1"/>
</dbReference>
<dbReference type="Gene3D" id="1.20.810.10">
    <property type="entry name" value="Cytochrome Bc1 Complex, Chain C"/>
    <property type="match status" value="1"/>
</dbReference>
<dbReference type="InterPro" id="IPR005798">
    <property type="entry name" value="Cyt_b/b6_C"/>
</dbReference>
<dbReference type="InterPro" id="IPR036150">
    <property type="entry name" value="Cyt_b/b6_C_sf"/>
</dbReference>
<dbReference type="InterPro" id="IPR005797">
    <property type="entry name" value="Cyt_b/b6_N"/>
</dbReference>
<dbReference type="InterPro" id="IPR027387">
    <property type="entry name" value="Cytb/b6-like_sf"/>
</dbReference>
<dbReference type="InterPro" id="IPR030689">
    <property type="entry name" value="Cytochrome_b"/>
</dbReference>
<dbReference type="InterPro" id="IPR048260">
    <property type="entry name" value="Cytochrome_b_C_euk/bac"/>
</dbReference>
<dbReference type="InterPro" id="IPR048259">
    <property type="entry name" value="Cytochrome_b_N_euk/bac"/>
</dbReference>
<dbReference type="InterPro" id="IPR016174">
    <property type="entry name" value="Di-haem_cyt_TM"/>
</dbReference>
<dbReference type="PANTHER" id="PTHR19271">
    <property type="entry name" value="CYTOCHROME B"/>
    <property type="match status" value="1"/>
</dbReference>
<dbReference type="PANTHER" id="PTHR19271:SF16">
    <property type="entry name" value="CYTOCHROME B"/>
    <property type="match status" value="1"/>
</dbReference>
<dbReference type="Pfam" id="PF00032">
    <property type="entry name" value="Cytochrom_B_C"/>
    <property type="match status" value="1"/>
</dbReference>
<dbReference type="Pfam" id="PF00033">
    <property type="entry name" value="Cytochrome_B"/>
    <property type="match status" value="1"/>
</dbReference>
<dbReference type="PIRSF" id="PIRSF038885">
    <property type="entry name" value="COB"/>
    <property type="match status" value="1"/>
</dbReference>
<dbReference type="SUPFAM" id="SSF81648">
    <property type="entry name" value="a domain/subunit of cytochrome bc1 complex (Ubiquinol-cytochrome c reductase)"/>
    <property type="match status" value="1"/>
</dbReference>
<dbReference type="SUPFAM" id="SSF81342">
    <property type="entry name" value="Transmembrane di-heme cytochromes"/>
    <property type="match status" value="1"/>
</dbReference>
<dbReference type="PROSITE" id="PS51003">
    <property type="entry name" value="CYTB_CTER"/>
    <property type="match status" value="1"/>
</dbReference>
<dbReference type="PROSITE" id="PS51002">
    <property type="entry name" value="CYTB_NTER"/>
    <property type="match status" value="1"/>
</dbReference>
<comment type="function">
    <text evidence="2">Component of the ubiquinol-cytochrome c reductase complex (complex III or cytochrome b-c1 complex) that is part of the mitochondrial respiratory chain. The b-c1 complex mediates electron transfer from ubiquinol to cytochrome c. Contributes to the generation of a proton gradient across the mitochondrial membrane that is then used for ATP synthesis.</text>
</comment>
<comment type="cofactor">
    <cofactor evidence="2">
        <name>heme b</name>
        <dbReference type="ChEBI" id="CHEBI:60344"/>
    </cofactor>
    <text evidence="2">Binds 2 heme b groups non-covalently.</text>
</comment>
<comment type="subunit">
    <text evidence="2">The main subunits of complex b-c1 are: cytochrome b, cytochrome c1 and the Rieske protein.</text>
</comment>
<comment type="subcellular location">
    <subcellularLocation>
        <location evidence="3">Mitochondrion inner membrane</location>
        <topology evidence="3">Multi-pass membrane protein</topology>
    </subcellularLocation>
</comment>
<comment type="miscellaneous">
    <text evidence="1">Heme 1 (or BL or b562) is low-potential and absorbs at about 562 nm, and heme 2 (or BH or b566) is high-potential and absorbs at about 566 nm.</text>
</comment>
<comment type="similarity">
    <text evidence="4 5 6">Belongs to the cytochrome b family.</text>
</comment>
<comment type="caution">
    <text evidence="2">The full-length protein contains only eight transmembrane helices, not nine as predicted by bioinformatics tools.</text>
</comment>
<gene>
    <name type="primary">mt:Cyt-b</name>
    <name type="synonym">Cob</name>
    <name type="synonym">cytb</name>
</gene>
<geneLocation type="mitochondrion" evidence="7"/>
<organism evidence="7">
    <name type="scientific">Drosophila mauritiana</name>
    <name type="common">Fruit fly</name>
    <dbReference type="NCBI Taxonomy" id="7226"/>
    <lineage>
        <taxon>Eukaryota</taxon>
        <taxon>Metazoa</taxon>
        <taxon>Ecdysozoa</taxon>
        <taxon>Arthropoda</taxon>
        <taxon>Hexapoda</taxon>
        <taxon>Insecta</taxon>
        <taxon>Pterygota</taxon>
        <taxon>Neoptera</taxon>
        <taxon>Endopterygota</taxon>
        <taxon>Diptera</taxon>
        <taxon>Brachycera</taxon>
        <taxon>Muscomorpha</taxon>
        <taxon>Ephydroidea</taxon>
        <taxon>Drosophilidae</taxon>
        <taxon>Drosophila</taxon>
        <taxon>Sophophora</taxon>
    </lineage>
</organism>
<proteinExistence type="inferred from homology"/>
<sequence length="378" mass="43140">MNKPLRNSHPLFKIANNALVDLPAPINISSWWNFGSLLGLCLIIQILTGLFLAMHYTADINLAFYSVNHICRDVNYGWLLRTLHANGASFFFICIYLHVGRGMYYGSYMFTPTWLIGVIILFLVMGTAFMGYVLPWGQMSFWGATVITNLLSAIPYLGMDLVQWLWGGFAVDNATLTRFFTFHFILPFIVLAMTMIHLLFLHQTGSNNPIGLNSNIDKIPFHPYFTFKDIVGFIVMIFILISLVLISPNLLGDPDNFIPANPLVTPAHIQPEWYFLFAYAILRSIPNKLGGVIALVLSIAILMILPFYNLSKFRGIQFYPINQVMFWSMLVTVILLTWIGARPVEEPYVLIGQILTVVYFLYYLVNPLITKWWDNLLN</sequence>
<evidence type="ECO:0000250" key="1"/>
<evidence type="ECO:0000250" key="2">
    <source>
        <dbReference type="UniProtKB" id="P00157"/>
    </source>
</evidence>
<evidence type="ECO:0000250" key="3">
    <source>
        <dbReference type="UniProtKB" id="P00163"/>
    </source>
</evidence>
<evidence type="ECO:0000255" key="4">
    <source>
        <dbReference type="PROSITE-ProRule" id="PRU00967"/>
    </source>
</evidence>
<evidence type="ECO:0000255" key="5">
    <source>
        <dbReference type="PROSITE-ProRule" id="PRU00968"/>
    </source>
</evidence>
<evidence type="ECO:0000305" key="6"/>
<evidence type="ECO:0000312" key="7">
    <source>
        <dbReference type="EMBL" id="AAF77263.1"/>
    </source>
</evidence>
<evidence type="ECO:0000312" key="8">
    <source>
        <dbReference type="EMBL" id="AAF77275.1"/>
    </source>
</evidence>
<protein>
    <recommendedName>
        <fullName>Cytochrome b</fullName>
    </recommendedName>
    <alternativeName>
        <fullName>Complex III subunit 3</fullName>
    </alternativeName>
    <alternativeName>
        <fullName>Complex III subunit III</fullName>
    </alternativeName>
    <alternativeName>
        <fullName>Cytochrome b-c1 complex subunit 3</fullName>
    </alternativeName>
    <alternativeName>
        <fullName>Ubiquinol-cytochrome-c reductase complex cytochrome b subunit</fullName>
    </alternativeName>
</protein>
<keyword id="KW-0249">Electron transport</keyword>
<keyword id="KW-0349">Heme</keyword>
<keyword id="KW-0408">Iron</keyword>
<keyword id="KW-0472">Membrane</keyword>
<keyword id="KW-0479">Metal-binding</keyword>
<keyword id="KW-0496">Mitochondrion</keyword>
<keyword id="KW-0999">Mitochondrion inner membrane</keyword>
<keyword id="KW-0679">Respiratory chain</keyword>
<keyword id="KW-0812">Transmembrane</keyword>
<keyword id="KW-1133">Transmembrane helix</keyword>
<keyword id="KW-0813">Transport</keyword>
<keyword id="KW-0830">Ubiquinone</keyword>
<name>CYB_DROMA</name>
<reference evidence="7" key="1">
    <citation type="submission" date="1999-11" db="EMBL/GenBank/DDBJ databases">
        <authorList>
            <person name="Ballard J.W.O."/>
        </authorList>
    </citation>
    <scope>NUCLEOTIDE SEQUENCE [GENOMIC DNA]</scope>
    <source>
        <strain evidence="8">BG1</strain>
        <strain evidence="7">G52</strain>
    </source>
</reference>
<reference evidence="6" key="2">
    <citation type="journal article" date="2003" name="Mol. Phylogenet. Evol.">
        <title>Macroevolutionary relationships of species of Drosophila melanogaster group based on mtDNA sequences.</title>
        <authorList>
            <person name="Kastanis P."/>
            <person name="Eliopoulos E."/>
            <person name="Goulielmos G.N."/>
            <person name="Tsakas S."/>
            <person name="Loukas M."/>
        </authorList>
    </citation>
    <scope>NUCLEOTIDE SEQUENCE [GENOMIC DNA] OF 352-378</scope>
</reference>
<feature type="chain" id="PRO_0000060892" description="Cytochrome b">
    <location>
        <begin position="1"/>
        <end position="378"/>
    </location>
</feature>
<feature type="transmembrane region" description="Helical" evidence="2">
    <location>
        <begin position="34"/>
        <end position="54"/>
    </location>
</feature>
<feature type="transmembrane region" description="Helical" evidence="2">
    <location>
        <begin position="78"/>
        <end position="99"/>
    </location>
</feature>
<feature type="transmembrane region" description="Helical" evidence="2">
    <location>
        <begin position="114"/>
        <end position="134"/>
    </location>
</feature>
<feature type="transmembrane region" description="Helical" evidence="2">
    <location>
        <begin position="179"/>
        <end position="199"/>
    </location>
</feature>
<feature type="transmembrane region" description="Helical" evidence="2">
    <location>
        <begin position="227"/>
        <end position="247"/>
    </location>
</feature>
<feature type="transmembrane region" description="Helical" evidence="2">
    <location>
        <begin position="289"/>
        <end position="309"/>
    </location>
</feature>
<feature type="transmembrane region" description="Helical" evidence="2">
    <location>
        <begin position="321"/>
        <end position="341"/>
    </location>
</feature>
<feature type="transmembrane region" description="Helical" evidence="2">
    <location>
        <begin position="348"/>
        <end position="368"/>
    </location>
</feature>
<feature type="binding site" description="axial binding residue" evidence="2">
    <location>
        <position position="84"/>
    </location>
    <ligand>
        <name>heme b</name>
        <dbReference type="ChEBI" id="CHEBI:60344"/>
        <label>b562</label>
    </ligand>
    <ligandPart>
        <name>Fe</name>
        <dbReference type="ChEBI" id="CHEBI:18248"/>
    </ligandPart>
</feature>
<feature type="binding site" description="axial binding residue" evidence="2">
    <location>
        <position position="98"/>
    </location>
    <ligand>
        <name>heme b</name>
        <dbReference type="ChEBI" id="CHEBI:60344"/>
        <label>b566</label>
    </ligand>
    <ligandPart>
        <name>Fe</name>
        <dbReference type="ChEBI" id="CHEBI:18248"/>
    </ligandPart>
</feature>
<feature type="binding site" description="axial binding residue" evidence="2">
    <location>
        <position position="183"/>
    </location>
    <ligand>
        <name>heme b</name>
        <dbReference type="ChEBI" id="CHEBI:60344"/>
        <label>b562</label>
    </ligand>
    <ligandPart>
        <name>Fe</name>
        <dbReference type="ChEBI" id="CHEBI:18248"/>
    </ligandPart>
</feature>
<feature type="binding site" description="axial binding residue" evidence="2">
    <location>
        <position position="197"/>
    </location>
    <ligand>
        <name>heme b</name>
        <dbReference type="ChEBI" id="CHEBI:60344"/>
        <label>b566</label>
    </ligand>
    <ligandPart>
        <name>Fe</name>
        <dbReference type="ChEBI" id="CHEBI:18248"/>
    </ligandPart>
</feature>
<feature type="binding site" evidence="2">
    <location>
        <position position="202"/>
    </location>
    <ligand>
        <name>a ubiquinone</name>
        <dbReference type="ChEBI" id="CHEBI:16389"/>
    </ligand>
</feature>
<feature type="sequence variant" description="In strain: BG1." evidence="6">
    <original>M</original>
    <variation>I</variation>
    <location>
        <position position="103"/>
    </location>
</feature>
<feature type="sequence variant" description="In strain: BG1." evidence="6">
    <original>V</original>
    <variation>M</variation>
    <location>
        <position position="235"/>
    </location>
</feature>